<dbReference type="EMBL" id="U12980">
    <property type="protein sequence ID" value="AAC05009.1"/>
    <property type="molecule type" value="Genomic_DNA"/>
</dbReference>
<dbReference type="EMBL" id="BK006935">
    <property type="protein sequence ID" value="DAA06921.1"/>
    <property type="molecule type" value="Genomic_DNA"/>
</dbReference>
<dbReference type="PIR" id="S53584">
    <property type="entry name" value="S53584"/>
</dbReference>
<dbReference type="RefSeq" id="NP_009335.1">
    <property type="nucleotide sequence ID" value="NM_001179897.1"/>
</dbReference>
<dbReference type="BioGRID" id="31763">
    <property type="interactions" value="36"/>
</dbReference>
<dbReference type="FunCoup" id="O13511">
    <property type="interactions" value="31"/>
</dbReference>
<dbReference type="STRING" id="4932.YAL065C"/>
<dbReference type="PaxDb" id="4932-YAL065C"/>
<dbReference type="EnsemblFungi" id="YAL065C_mRNA">
    <property type="protein sequence ID" value="YAL065C"/>
    <property type="gene ID" value="YAL065C"/>
</dbReference>
<dbReference type="GeneID" id="851232"/>
<dbReference type="KEGG" id="sce:YAL065C"/>
<dbReference type="AGR" id="SGD:S000001817"/>
<dbReference type="SGD" id="S000001817">
    <property type="gene designation" value="YAL065C"/>
</dbReference>
<dbReference type="VEuPathDB" id="FungiDB:YAL065C"/>
<dbReference type="HOGENOM" id="CLU_067733_1_0_1"/>
<dbReference type="InParanoid" id="O13511"/>
<dbReference type="OrthoDB" id="3998251at2759"/>
<dbReference type="BioCyc" id="YEAST:G3O-28889-MONOMER"/>
<dbReference type="BioGRID-ORCS" id="851232">
    <property type="hits" value="0 hits in 10 CRISPR screens"/>
</dbReference>
<dbReference type="PRO" id="PR:O13511"/>
<dbReference type="Proteomes" id="UP000002311">
    <property type="component" value="Chromosome I"/>
</dbReference>
<dbReference type="RNAct" id="O13511">
    <property type="molecule type" value="protein"/>
</dbReference>
<dbReference type="GO" id="GO:0016020">
    <property type="term" value="C:membrane"/>
    <property type="evidence" value="ECO:0007669"/>
    <property type="project" value="UniProtKB-SubCell"/>
</dbReference>
<keyword id="KW-0472">Membrane</keyword>
<keyword id="KW-1185">Reference proteome</keyword>
<keyword id="KW-0812">Transmembrane</keyword>
<keyword id="KW-1133">Transmembrane helix</keyword>
<gene>
    <name type="ordered locus">YAL065C</name>
</gene>
<proteinExistence type="evidence at transcript level"/>
<comment type="subcellular location">
    <subcellularLocation>
        <location evidence="4">Membrane</location>
        <topology evidence="4">Single-pass membrane protein</topology>
    </subcellularLocation>
</comment>
<comment type="induction">
    <text evidence="3">By FLO1.</text>
</comment>
<comment type="similarity">
    <text evidence="4">Belongs to the flocculin family.</text>
</comment>
<reference key="1">
    <citation type="journal article" date="1995" name="Proc. Natl. Acad. Sci. U.S.A.">
        <title>The nucleotide sequence of chromosome I from Saccharomyces cerevisiae.</title>
        <authorList>
            <person name="Bussey H."/>
            <person name="Kaback D.B."/>
            <person name="Zhong W.-W."/>
            <person name="Vo D.H."/>
            <person name="Clark M.W."/>
            <person name="Fortin N."/>
            <person name="Hall J."/>
            <person name="Ouellette B.F.F."/>
            <person name="Keng T."/>
            <person name="Barton A.B."/>
            <person name="Su Y."/>
            <person name="Davies C.J."/>
            <person name="Storms R.K."/>
        </authorList>
    </citation>
    <scope>NUCLEOTIDE SEQUENCE [LARGE SCALE GENOMIC DNA]</scope>
    <source>
        <strain>ATCC 204508 / S288c</strain>
    </source>
</reference>
<reference key="2">
    <citation type="journal article" date="2014" name="G3 (Bethesda)">
        <title>The reference genome sequence of Saccharomyces cerevisiae: Then and now.</title>
        <authorList>
            <person name="Engel S.R."/>
            <person name="Dietrich F.S."/>
            <person name="Fisk D.G."/>
            <person name="Binkley G."/>
            <person name="Balakrishnan R."/>
            <person name="Costanzo M.C."/>
            <person name="Dwight S.S."/>
            <person name="Hitz B.C."/>
            <person name="Karra K."/>
            <person name="Nash R.S."/>
            <person name="Weng S."/>
            <person name="Wong E.D."/>
            <person name="Lloyd P."/>
            <person name="Skrzypek M.S."/>
            <person name="Miyasato S.R."/>
            <person name="Simison M."/>
            <person name="Cherry J.M."/>
        </authorList>
    </citation>
    <scope>GENOME REANNOTATION</scope>
    <source>
        <strain>ATCC 204508 / S288c</strain>
    </source>
</reference>
<reference key="3">
    <citation type="journal article" date="1999" name="Curr. Genet.">
        <title>Analysis of the genes activated by the FLO8 gene in Saccharomyces cerevisiae.</title>
        <authorList>
            <person name="Kobayashi O."/>
            <person name="Yoshimoto H."/>
            <person name="Sone H."/>
        </authorList>
    </citation>
    <scope>INDUCTION</scope>
</reference>
<feature type="chain" id="PRO_0000248430" description="Uncharacterized protein YAL065C">
    <location>
        <begin position="1"/>
        <end position="128"/>
    </location>
</feature>
<feature type="transmembrane region" description="Helical" evidence="1">
    <location>
        <begin position="105"/>
        <end position="127"/>
    </location>
</feature>
<feature type="region of interest" description="Disordered" evidence="2">
    <location>
        <begin position="1"/>
        <end position="26"/>
    </location>
</feature>
<organism>
    <name type="scientific">Saccharomyces cerevisiae (strain ATCC 204508 / S288c)</name>
    <name type="common">Baker's yeast</name>
    <dbReference type="NCBI Taxonomy" id="559292"/>
    <lineage>
        <taxon>Eukaryota</taxon>
        <taxon>Fungi</taxon>
        <taxon>Dikarya</taxon>
        <taxon>Ascomycota</taxon>
        <taxon>Saccharomycotina</taxon>
        <taxon>Saccharomycetes</taxon>
        <taxon>Saccharomycetales</taxon>
        <taxon>Saccharomycetaceae</taxon>
        <taxon>Saccharomyces</taxon>
    </lineage>
</organism>
<evidence type="ECO:0000255" key="1"/>
<evidence type="ECO:0000256" key="2">
    <source>
        <dbReference type="SAM" id="MobiDB-lite"/>
    </source>
</evidence>
<evidence type="ECO:0000269" key="3">
    <source>
    </source>
</evidence>
<evidence type="ECO:0000305" key="4"/>
<accession>O13511</accession>
<accession>D6VPF1</accession>
<name>YA065_YEAST</name>
<sequence length="128" mass="12919">MNSATSETTTNTGAAETTTSTGAAETKTVVTSSISRFNHAETQTASATDVIGHSSSVVSVSETGNTKSLITSGLSTMSQQPRSTPASSIIGSSTASLEISTYVGIANGLLTNNGISVFISTVLLAIVW</sequence>
<protein>
    <recommendedName>
        <fullName>Uncharacterized protein YAL065C</fullName>
    </recommendedName>
</protein>